<keyword id="KW-0963">Cytoplasm</keyword>
<keyword id="KW-0269">Exonuclease</keyword>
<keyword id="KW-0378">Hydrolase</keyword>
<keyword id="KW-0433">Leucine-rich repeat</keyword>
<keyword id="KW-0460">Magnesium</keyword>
<keyword id="KW-0479">Metal-binding</keyword>
<keyword id="KW-0540">Nuclease</keyword>
<keyword id="KW-0539">Nucleus</keyword>
<keyword id="KW-1185">Reference proteome</keyword>
<keyword id="KW-0677">Repeat</keyword>
<keyword id="KW-0694">RNA-binding</keyword>
<keyword id="KW-0804">Transcription</keyword>
<keyword id="KW-0805">Transcription regulation</keyword>
<evidence type="ECO:0000250" key="1"/>
<evidence type="ECO:0000250" key="2">
    <source>
        <dbReference type="UniProtKB" id="O95551"/>
    </source>
</evidence>
<evidence type="ECO:0000250" key="3">
    <source>
        <dbReference type="UniProtKB" id="P31384"/>
    </source>
</evidence>
<evidence type="ECO:0000256" key="4">
    <source>
        <dbReference type="SAM" id="MobiDB-lite"/>
    </source>
</evidence>
<evidence type="ECO:0000305" key="5"/>
<reference key="1">
    <citation type="journal article" date="2004" name="Nature">
        <title>Genome evolution in yeasts.</title>
        <authorList>
            <person name="Dujon B."/>
            <person name="Sherman D."/>
            <person name="Fischer G."/>
            <person name="Durrens P."/>
            <person name="Casaregola S."/>
            <person name="Lafontaine I."/>
            <person name="de Montigny J."/>
            <person name="Marck C."/>
            <person name="Neuveglise C."/>
            <person name="Talla E."/>
            <person name="Goffard N."/>
            <person name="Frangeul L."/>
            <person name="Aigle M."/>
            <person name="Anthouard V."/>
            <person name="Babour A."/>
            <person name="Barbe V."/>
            <person name="Barnay S."/>
            <person name="Blanchin S."/>
            <person name="Beckerich J.-M."/>
            <person name="Beyne E."/>
            <person name="Bleykasten C."/>
            <person name="Boisrame A."/>
            <person name="Boyer J."/>
            <person name="Cattolico L."/>
            <person name="Confanioleri F."/>
            <person name="de Daruvar A."/>
            <person name="Despons L."/>
            <person name="Fabre E."/>
            <person name="Fairhead C."/>
            <person name="Ferry-Dumazet H."/>
            <person name="Groppi A."/>
            <person name="Hantraye F."/>
            <person name="Hennequin C."/>
            <person name="Jauniaux N."/>
            <person name="Joyet P."/>
            <person name="Kachouri R."/>
            <person name="Kerrest A."/>
            <person name="Koszul R."/>
            <person name="Lemaire M."/>
            <person name="Lesur I."/>
            <person name="Ma L."/>
            <person name="Muller H."/>
            <person name="Nicaud J.-M."/>
            <person name="Nikolski M."/>
            <person name="Oztas S."/>
            <person name="Ozier-Kalogeropoulos O."/>
            <person name="Pellenz S."/>
            <person name="Potier S."/>
            <person name="Richard G.-F."/>
            <person name="Straub M.-L."/>
            <person name="Suleau A."/>
            <person name="Swennen D."/>
            <person name="Tekaia F."/>
            <person name="Wesolowski-Louvel M."/>
            <person name="Westhof E."/>
            <person name="Wirth B."/>
            <person name="Zeniou-Meyer M."/>
            <person name="Zivanovic Y."/>
            <person name="Bolotin-Fukuhara M."/>
            <person name="Thierry A."/>
            <person name="Bouchier C."/>
            <person name="Caudron B."/>
            <person name="Scarpelli C."/>
            <person name="Gaillardin C."/>
            <person name="Weissenbach J."/>
            <person name="Wincker P."/>
            <person name="Souciet J.-L."/>
        </authorList>
    </citation>
    <scope>NUCLEOTIDE SEQUENCE [LARGE SCALE GENOMIC DNA]</scope>
    <source>
        <strain>ATCC 8585 / CBS 2359 / DSM 70799 / NBRC 1267 / NRRL Y-1140 / WM37</strain>
    </source>
</reference>
<gene>
    <name type="primary">CCR4</name>
    <name type="ordered locus">KLLA0F15884g</name>
</gene>
<organism>
    <name type="scientific">Kluyveromyces lactis (strain ATCC 8585 / CBS 2359 / DSM 70799 / NBRC 1267 / NRRL Y-1140 / WM37)</name>
    <name type="common">Yeast</name>
    <name type="synonym">Candida sphaerica</name>
    <dbReference type="NCBI Taxonomy" id="284590"/>
    <lineage>
        <taxon>Eukaryota</taxon>
        <taxon>Fungi</taxon>
        <taxon>Dikarya</taxon>
        <taxon>Ascomycota</taxon>
        <taxon>Saccharomycotina</taxon>
        <taxon>Saccharomycetes</taxon>
        <taxon>Saccharomycetales</taxon>
        <taxon>Saccharomycetaceae</taxon>
        <taxon>Kluyveromyces</taxon>
    </lineage>
</organism>
<sequence length="790" mass="89628">MNYPPPLSGFQKPAGQAVPQMVGTPQAVTQQLHQHPPGLMGNQGNQHQPAQLNNVLPMMMNQVQNVITGGAGGPQQAVGPPNVGTPNAAQAALVAQQLSNANNPLCHPHLADPSLLNSPIWKLQLQLAAVSRQSLGQSNVYARQNAMKKFLNNQNQLGLSTNGQDGVQSQQQQGQQQQPSQSGQQQGQQPLGNDASMSLVEHTKQHLMEMASSGNEATASAVNVNSDLNSTGFSTPNTPKAELHPNTPSLLLQHKKLSQYNIDEDDEIEHRMVAPTNSKHDDQLWHALDLSNLALFNLNEKLFHYEFLTRLYLNGNSLTSLPSSIKKLRNLRVLDLSHNRLTELPKELGMCYQLKYLYFFDNMITTIPWEFGNLFNLQFLGLEGNPLDKQLVKIIAEKSVTGLIFYLRDNAPEIPYAKDRKFIEISADGEPTNEYESLQENTNHMNNTLLKNSFTLLSYNTLCHHYATPKMYRFTPSWALSWDYRREKLKEQLLDFDTDVICLQEVETLTYEEYWVPLMEKYNYSCLFHAKTRAKTMHAKDSKKVDGCAIFYKKDQFQLVFQDSIDFSSAWRSHKKFHRTEDYLNRAMNKDNVALIAELKHLNTNENVWVVTTHLHWDPQFNDVKTFQVGVMLDYLETLIKQHHHVNNNNDIKKIPMVICGDFNSQLDSAVVELFNSGHVTANHKDIDQRDFGYMSQKNFSHNLSLRSSYGAIGELPFTNMTPSFTDVIDYIWYSSQSLRVRGLLGKIDEEYASKFIGFPNDKFPSDHIPLVTRFEISRGNATQTSSRKV</sequence>
<accession>Q6CJU4</accession>
<name>CCR4_KLULA</name>
<protein>
    <recommendedName>
        <fullName evidence="5">CCR4-Not complex 3'-5'-exoribonuclease subunit Ccr4</fullName>
        <ecNumber>3.1.13.4</ecNumber>
    </recommendedName>
    <alternativeName>
        <fullName>Carbon catabolite repressor protein 4</fullName>
    </alternativeName>
    <alternativeName>
        <fullName>Cytoplasmic deadenylase</fullName>
    </alternativeName>
    <alternativeName>
        <fullName>Glucose-repressible alcohol dehydrogenase transcriptional effector</fullName>
    </alternativeName>
</protein>
<comment type="function">
    <text evidence="3">Acts as a catalytic component of the CCR4-NOT core complex, which in the nucleus seems to be a general transcription factor, and in the cytoplasm the major mRNA deadenylase involved in mRNA turnover (By similarity). Ccr4 has 3'-5' RNase activity with a strong preference for polyadenylated substrates and also low exonuclease activity towards single-stranded DNA (By similarity).</text>
</comment>
<comment type="catalytic activity">
    <reaction>
        <text>Exonucleolytic cleavage of poly(A) to 5'-AMP.</text>
        <dbReference type="EC" id="3.1.13.4"/>
    </reaction>
</comment>
<comment type="cofactor">
    <cofactor evidence="1">
        <name>Mg(2+)</name>
        <dbReference type="ChEBI" id="CHEBI:18420"/>
    </cofactor>
</comment>
<comment type="subcellular location">
    <subcellularLocation>
        <location evidence="1">Cytoplasm</location>
    </subcellularLocation>
    <subcellularLocation>
        <location evidence="1">Nucleus</location>
    </subcellularLocation>
</comment>
<comment type="similarity">
    <text evidence="5">Belongs to the CCR4/nocturin family.</text>
</comment>
<proteinExistence type="inferred from homology"/>
<dbReference type="EC" id="3.1.13.4"/>
<dbReference type="EMBL" id="CR382126">
    <property type="protein sequence ID" value="CAG98503.1"/>
    <property type="molecule type" value="Genomic_DNA"/>
</dbReference>
<dbReference type="RefSeq" id="XP_455795.1">
    <property type="nucleotide sequence ID" value="XM_455795.1"/>
</dbReference>
<dbReference type="SMR" id="Q6CJU4"/>
<dbReference type="FunCoup" id="Q6CJU4">
    <property type="interactions" value="504"/>
</dbReference>
<dbReference type="STRING" id="284590.Q6CJU4"/>
<dbReference type="PaxDb" id="284590-Q6CJU4"/>
<dbReference type="KEGG" id="kla:KLLA0_F15884g"/>
<dbReference type="eggNOG" id="KOG0620">
    <property type="taxonomic scope" value="Eukaryota"/>
</dbReference>
<dbReference type="HOGENOM" id="CLU_016428_4_1_1"/>
<dbReference type="InParanoid" id="Q6CJU4"/>
<dbReference type="OMA" id="EHRMVAP"/>
<dbReference type="Proteomes" id="UP000000598">
    <property type="component" value="Chromosome F"/>
</dbReference>
<dbReference type="GO" id="GO:0005737">
    <property type="term" value="C:cytoplasm"/>
    <property type="evidence" value="ECO:0007669"/>
    <property type="project" value="UniProtKB-SubCell"/>
</dbReference>
<dbReference type="GO" id="GO:0005634">
    <property type="term" value="C:nucleus"/>
    <property type="evidence" value="ECO:0007669"/>
    <property type="project" value="UniProtKB-SubCell"/>
</dbReference>
<dbReference type="GO" id="GO:0046872">
    <property type="term" value="F:metal ion binding"/>
    <property type="evidence" value="ECO:0007669"/>
    <property type="project" value="UniProtKB-KW"/>
</dbReference>
<dbReference type="GO" id="GO:0004535">
    <property type="term" value="F:poly(A)-specific ribonuclease activity"/>
    <property type="evidence" value="ECO:0007669"/>
    <property type="project" value="UniProtKB-EC"/>
</dbReference>
<dbReference type="GO" id="GO:0003723">
    <property type="term" value="F:RNA binding"/>
    <property type="evidence" value="ECO:0007669"/>
    <property type="project" value="UniProtKB-KW"/>
</dbReference>
<dbReference type="FunFam" id="3.60.10.10:FF:000037">
    <property type="entry name" value="Glucose-repressible alcohol dehydrogenase transcriptional effector"/>
    <property type="match status" value="1"/>
</dbReference>
<dbReference type="FunFam" id="3.80.10.10:FF:000598">
    <property type="entry name" value="Glucose-repressible alcohol dehydrogenase transcriptional effector"/>
    <property type="match status" value="1"/>
</dbReference>
<dbReference type="Gene3D" id="3.60.10.10">
    <property type="entry name" value="Endonuclease/exonuclease/phosphatase"/>
    <property type="match status" value="1"/>
</dbReference>
<dbReference type="Gene3D" id="3.80.10.10">
    <property type="entry name" value="Ribonuclease Inhibitor"/>
    <property type="match status" value="2"/>
</dbReference>
<dbReference type="InterPro" id="IPR050410">
    <property type="entry name" value="CCR4/nocturin_mRNA_transcr"/>
</dbReference>
<dbReference type="InterPro" id="IPR036691">
    <property type="entry name" value="Endo/exonu/phosph_ase_sf"/>
</dbReference>
<dbReference type="InterPro" id="IPR005135">
    <property type="entry name" value="Endo/exonuclease/phosphatase"/>
</dbReference>
<dbReference type="InterPro" id="IPR001611">
    <property type="entry name" value="Leu-rich_rpt"/>
</dbReference>
<dbReference type="InterPro" id="IPR003591">
    <property type="entry name" value="Leu-rich_rpt_typical-subtyp"/>
</dbReference>
<dbReference type="InterPro" id="IPR032675">
    <property type="entry name" value="LRR_dom_sf"/>
</dbReference>
<dbReference type="PANTHER" id="PTHR12121">
    <property type="entry name" value="CARBON CATABOLITE REPRESSOR PROTEIN 4"/>
    <property type="match status" value="1"/>
</dbReference>
<dbReference type="PANTHER" id="PTHR12121:SF100">
    <property type="entry name" value="POLY(A)-SPECIFIC RIBONUCLEASE"/>
    <property type="match status" value="1"/>
</dbReference>
<dbReference type="Pfam" id="PF03372">
    <property type="entry name" value="Exo_endo_phos"/>
    <property type="match status" value="1"/>
</dbReference>
<dbReference type="Pfam" id="PF00560">
    <property type="entry name" value="LRR_1"/>
    <property type="match status" value="1"/>
</dbReference>
<dbReference type="Pfam" id="PF13855">
    <property type="entry name" value="LRR_8"/>
    <property type="match status" value="1"/>
</dbReference>
<dbReference type="SMART" id="SM00369">
    <property type="entry name" value="LRR_TYP"/>
    <property type="match status" value="2"/>
</dbReference>
<dbReference type="SUPFAM" id="SSF56219">
    <property type="entry name" value="DNase I-like"/>
    <property type="match status" value="1"/>
</dbReference>
<dbReference type="SUPFAM" id="SSF52058">
    <property type="entry name" value="L domain-like"/>
    <property type="match status" value="1"/>
</dbReference>
<dbReference type="PROSITE" id="PS51450">
    <property type="entry name" value="LRR"/>
    <property type="match status" value="4"/>
</dbReference>
<feature type="chain" id="PRO_0000290613" description="CCR4-Not complex 3'-5'-exoribonuclease subunit Ccr4">
    <location>
        <begin position="1"/>
        <end position="790"/>
    </location>
</feature>
<feature type="repeat" description="LRR 1">
    <location>
        <begin position="251"/>
        <end position="272"/>
    </location>
</feature>
<feature type="repeat" description="LRR 2">
    <location>
        <begin position="283"/>
        <end position="305"/>
    </location>
</feature>
<feature type="repeat" description="LRR 3">
    <location>
        <begin position="307"/>
        <end position="328"/>
    </location>
</feature>
<feature type="repeat" description="LRR 4">
    <location>
        <begin position="330"/>
        <end position="351"/>
    </location>
</feature>
<feature type="repeat" description="LRR 5">
    <location>
        <begin position="353"/>
        <end position="374"/>
    </location>
</feature>
<feature type="repeat" description="LRR 6">
    <location>
        <begin position="376"/>
        <end position="398"/>
    </location>
</feature>
<feature type="region of interest" description="Disordered" evidence="4">
    <location>
        <begin position="156"/>
        <end position="193"/>
    </location>
</feature>
<feature type="compositionally biased region" description="Polar residues" evidence="4">
    <location>
        <begin position="156"/>
        <end position="167"/>
    </location>
</feature>
<feature type="compositionally biased region" description="Low complexity" evidence="4">
    <location>
        <begin position="168"/>
        <end position="190"/>
    </location>
</feature>
<feature type="binding site" evidence="2">
    <location>
        <position position="505"/>
    </location>
    <ligand>
        <name>Mg(2+)</name>
        <dbReference type="ChEBI" id="CHEBI:18420"/>
    </ligand>
</feature>